<sequence>MLQPKRTKYRKQHKGRNTGVAIAGSKVSFGEYGLKATTRGRITARQIEAARRTISRHVKRGGKIWIRVFPDKPVSKKPLEVRMGSGKGSVEFWVAEIKPGTMLYELEGVSEELAREAFRLAAAKLPVQTTFSLRTVM</sequence>
<reference key="1">
    <citation type="journal article" date="2004" name="PLoS Biol.">
        <title>Genomic insights into methanotrophy: the complete genome sequence of Methylococcus capsulatus (Bath).</title>
        <authorList>
            <person name="Ward N.L."/>
            <person name="Larsen O."/>
            <person name="Sakwa J."/>
            <person name="Bruseth L."/>
            <person name="Khouri H.M."/>
            <person name="Durkin A.S."/>
            <person name="Dimitrov G."/>
            <person name="Jiang L."/>
            <person name="Scanlan D."/>
            <person name="Kang K.H."/>
            <person name="Lewis M.R."/>
            <person name="Nelson K.E."/>
            <person name="Methe B.A."/>
            <person name="Wu M."/>
            <person name="Heidelberg J.F."/>
            <person name="Paulsen I.T."/>
            <person name="Fouts D.E."/>
            <person name="Ravel J."/>
            <person name="Tettelin H."/>
            <person name="Ren Q."/>
            <person name="Read T.D."/>
            <person name="DeBoy R.T."/>
            <person name="Seshadri R."/>
            <person name="Salzberg S.L."/>
            <person name="Jensen H.B."/>
            <person name="Birkeland N.K."/>
            <person name="Nelson W.C."/>
            <person name="Dodson R.J."/>
            <person name="Grindhaug S.H."/>
            <person name="Holt I.E."/>
            <person name="Eidhammer I."/>
            <person name="Jonasen I."/>
            <person name="Vanaken S."/>
            <person name="Utterback T.R."/>
            <person name="Feldblyum T.V."/>
            <person name="Fraser C.M."/>
            <person name="Lillehaug J.R."/>
            <person name="Eisen J.A."/>
        </authorList>
    </citation>
    <scope>NUCLEOTIDE SEQUENCE [LARGE SCALE GENOMIC DNA]</scope>
    <source>
        <strain>ATCC 33009 / NCIMB 11132 / Bath</strain>
    </source>
</reference>
<proteinExistence type="inferred from homology"/>
<accession>Q605B9</accession>
<gene>
    <name evidence="1" type="primary">rplP</name>
    <name type="ordered locus">MCA2365</name>
</gene>
<keyword id="KW-1185">Reference proteome</keyword>
<keyword id="KW-0687">Ribonucleoprotein</keyword>
<keyword id="KW-0689">Ribosomal protein</keyword>
<keyword id="KW-0694">RNA-binding</keyword>
<keyword id="KW-0699">rRNA-binding</keyword>
<keyword id="KW-0820">tRNA-binding</keyword>
<protein>
    <recommendedName>
        <fullName evidence="1">Large ribosomal subunit protein uL16</fullName>
    </recommendedName>
    <alternativeName>
        <fullName evidence="2">50S ribosomal protein L16</fullName>
    </alternativeName>
</protein>
<organism>
    <name type="scientific">Methylococcus capsulatus (strain ATCC 33009 / NCIMB 11132 / Bath)</name>
    <dbReference type="NCBI Taxonomy" id="243233"/>
    <lineage>
        <taxon>Bacteria</taxon>
        <taxon>Pseudomonadati</taxon>
        <taxon>Pseudomonadota</taxon>
        <taxon>Gammaproteobacteria</taxon>
        <taxon>Methylococcales</taxon>
        <taxon>Methylococcaceae</taxon>
        <taxon>Methylococcus</taxon>
    </lineage>
</organism>
<evidence type="ECO:0000255" key="1">
    <source>
        <dbReference type="HAMAP-Rule" id="MF_01342"/>
    </source>
</evidence>
<evidence type="ECO:0000305" key="2"/>
<comment type="function">
    <text evidence="1">Binds 23S rRNA and is also seen to make contacts with the A and possibly P site tRNAs.</text>
</comment>
<comment type="subunit">
    <text evidence="1">Part of the 50S ribosomal subunit.</text>
</comment>
<comment type="similarity">
    <text evidence="1">Belongs to the universal ribosomal protein uL16 family.</text>
</comment>
<name>RL16_METCA</name>
<dbReference type="EMBL" id="AE017282">
    <property type="protein sequence ID" value="AAU91470.1"/>
    <property type="molecule type" value="Genomic_DNA"/>
</dbReference>
<dbReference type="RefSeq" id="WP_010961593.1">
    <property type="nucleotide sequence ID" value="NC_002977.6"/>
</dbReference>
<dbReference type="SMR" id="Q605B9"/>
<dbReference type="STRING" id="243233.MCA2365"/>
<dbReference type="GeneID" id="88224567"/>
<dbReference type="KEGG" id="mca:MCA2365"/>
<dbReference type="eggNOG" id="COG0197">
    <property type="taxonomic scope" value="Bacteria"/>
</dbReference>
<dbReference type="HOGENOM" id="CLU_078858_2_1_6"/>
<dbReference type="Proteomes" id="UP000006821">
    <property type="component" value="Chromosome"/>
</dbReference>
<dbReference type="GO" id="GO:0022625">
    <property type="term" value="C:cytosolic large ribosomal subunit"/>
    <property type="evidence" value="ECO:0007669"/>
    <property type="project" value="TreeGrafter"/>
</dbReference>
<dbReference type="GO" id="GO:0019843">
    <property type="term" value="F:rRNA binding"/>
    <property type="evidence" value="ECO:0007669"/>
    <property type="project" value="UniProtKB-UniRule"/>
</dbReference>
<dbReference type="GO" id="GO:0003735">
    <property type="term" value="F:structural constituent of ribosome"/>
    <property type="evidence" value="ECO:0007669"/>
    <property type="project" value="InterPro"/>
</dbReference>
<dbReference type="GO" id="GO:0000049">
    <property type="term" value="F:tRNA binding"/>
    <property type="evidence" value="ECO:0007669"/>
    <property type="project" value="UniProtKB-KW"/>
</dbReference>
<dbReference type="GO" id="GO:0006412">
    <property type="term" value="P:translation"/>
    <property type="evidence" value="ECO:0007669"/>
    <property type="project" value="UniProtKB-UniRule"/>
</dbReference>
<dbReference type="CDD" id="cd01433">
    <property type="entry name" value="Ribosomal_L16_L10e"/>
    <property type="match status" value="1"/>
</dbReference>
<dbReference type="FunFam" id="3.90.1170.10:FF:000001">
    <property type="entry name" value="50S ribosomal protein L16"/>
    <property type="match status" value="1"/>
</dbReference>
<dbReference type="Gene3D" id="3.90.1170.10">
    <property type="entry name" value="Ribosomal protein L10e/L16"/>
    <property type="match status" value="1"/>
</dbReference>
<dbReference type="HAMAP" id="MF_01342">
    <property type="entry name" value="Ribosomal_uL16"/>
    <property type="match status" value="1"/>
</dbReference>
<dbReference type="InterPro" id="IPR047873">
    <property type="entry name" value="Ribosomal_uL16"/>
</dbReference>
<dbReference type="InterPro" id="IPR000114">
    <property type="entry name" value="Ribosomal_uL16_bact-type"/>
</dbReference>
<dbReference type="InterPro" id="IPR020798">
    <property type="entry name" value="Ribosomal_uL16_CS"/>
</dbReference>
<dbReference type="InterPro" id="IPR016180">
    <property type="entry name" value="Ribosomal_uL16_dom"/>
</dbReference>
<dbReference type="InterPro" id="IPR036920">
    <property type="entry name" value="Ribosomal_uL16_sf"/>
</dbReference>
<dbReference type="NCBIfam" id="TIGR01164">
    <property type="entry name" value="rplP_bact"/>
    <property type="match status" value="1"/>
</dbReference>
<dbReference type="PANTHER" id="PTHR12220">
    <property type="entry name" value="50S/60S RIBOSOMAL PROTEIN L16"/>
    <property type="match status" value="1"/>
</dbReference>
<dbReference type="PANTHER" id="PTHR12220:SF13">
    <property type="entry name" value="LARGE RIBOSOMAL SUBUNIT PROTEIN UL16M"/>
    <property type="match status" value="1"/>
</dbReference>
<dbReference type="Pfam" id="PF00252">
    <property type="entry name" value="Ribosomal_L16"/>
    <property type="match status" value="1"/>
</dbReference>
<dbReference type="PRINTS" id="PR00060">
    <property type="entry name" value="RIBOSOMALL16"/>
</dbReference>
<dbReference type="SUPFAM" id="SSF54686">
    <property type="entry name" value="Ribosomal protein L16p/L10e"/>
    <property type="match status" value="1"/>
</dbReference>
<dbReference type="PROSITE" id="PS00586">
    <property type="entry name" value="RIBOSOMAL_L16_1"/>
    <property type="match status" value="1"/>
</dbReference>
<dbReference type="PROSITE" id="PS00701">
    <property type="entry name" value="RIBOSOMAL_L16_2"/>
    <property type="match status" value="1"/>
</dbReference>
<feature type="chain" id="PRO_0000062134" description="Large ribosomal subunit protein uL16">
    <location>
        <begin position="1"/>
        <end position="137"/>
    </location>
</feature>